<name>GVPN_ANCAQ</name>
<evidence type="ECO:0000250" key="1">
    <source>
        <dbReference type="UniProtKB" id="Q8YUT0"/>
    </source>
</evidence>
<evidence type="ECO:0000250" key="2">
    <source>
        <dbReference type="UniProtKB" id="Q9HI16"/>
    </source>
</evidence>
<evidence type="ECO:0000255" key="3"/>
<evidence type="ECO:0000256" key="4">
    <source>
        <dbReference type="SAM" id="MobiDB-lite"/>
    </source>
</evidence>
<evidence type="ECO:0000303" key="5">
    <source ref="1"/>
</evidence>
<evidence type="ECO:0000305" key="6"/>
<evidence type="ECO:0000305" key="7">
    <source>
    </source>
</evidence>
<feature type="chain" id="PRO_0000219565" description="Gas vesicle ATPase GvpN">
    <location>
        <begin position="1"/>
        <end position="357"/>
    </location>
</feature>
<feature type="region of interest" description="Disordered" evidence="4">
    <location>
        <begin position="22"/>
        <end position="43"/>
    </location>
</feature>
<feature type="compositionally biased region" description="Polar residues" evidence="4">
    <location>
        <begin position="22"/>
        <end position="36"/>
    </location>
</feature>
<feature type="binding site" evidence="3">
    <location>
        <begin position="72"/>
        <end position="79"/>
    </location>
    <ligand>
        <name>ATP</name>
        <dbReference type="ChEBI" id="CHEBI:30616"/>
    </ligand>
</feature>
<gene>
    <name evidence="5" type="primary">gvpN</name>
</gene>
<keyword id="KW-0067">ATP-binding</keyword>
<keyword id="KW-0963">Cytoplasm</keyword>
<keyword id="KW-0304">Gas vesicle</keyword>
<keyword id="KW-0378">Hydrolase</keyword>
<keyword id="KW-0547">Nucleotide-binding</keyword>
<sequence length="357" mass="38792">MTSEAASKDPISVLSGFGAGTATSASKNGGRTTPSALTPRPRSGFVETEQVRDLTRRGLGFLNAGYPLHFRGPAGTGKTTLALHVAAQLGRPVIIITGDNELGTADLVGSQRGYHYRKVVDQFIHNVTKLEETANQHWTDHRLTTACREGFTLVYDEFTRSRPETHNVLLGVFEERMLFLPAQAREECYIKVHPEFRAIFTSNPQEYAGVHASQDALADRLATIDVDYPDRAMELAVASARTGMAEASAARIIDLVRAFRASGDYQQTPTMRASLMIARVAALEGLDVSVDDPRFVQLCSDALESRIFSGQRAEAVAREQRRAALYALIETYCPSVAKPRARRAGGGARAGVEGALP</sequence>
<organism>
    <name type="scientific">Ancylobacter aquaticus</name>
    <dbReference type="NCBI Taxonomy" id="100"/>
    <lineage>
        <taxon>Bacteria</taxon>
        <taxon>Pseudomonadati</taxon>
        <taxon>Pseudomonadota</taxon>
        <taxon>Alphaproteobacteria</taxon>
        <taxon>Hyphomicrobiales</taxon>
        <taxon>Xanthobacteraceae</taxon>
        <taxon>Ancylobacter</taxon>
    </lineage>
</organism>
<comment type="function">
    <text evidence="1 2 7">An ATPase that functions in gas vesicle formation (By similarity). A minor component of the gas vesicle, also found in soluble extracts (By similarity). Gas vesicles (GV) are hollow, gas filled proteinaceous nanostructures. During planktonic growth they allow positioning of the organism at a favorable depth for light or nutrient acquisition (Probable).</text>
</comment>
<comment type="catalytic activity">
    <reaction evidence="1">
        <text>ATP + H2O = ADP + phosphate + H(+)</text>
        <dbReference type="Rhea" id="RHEA:13065"/>
        <dbReference type="ChEBI" id="CHEBI:15377"/>
        <dbReference type="ChEBI" id="CHEBI:15378"/>
        <dbReference type="ChEBI" id="CHEBI:30616"/>
        <dbReference type="ChEBI" id="CHEBI:43474"/>
        <dbReference type="ChEBI" id="CHEBI:456216"/>
    </reaction>
</comment>
<comment type="subunit">
    <text evidence="2">Forms homodimers, probably interacts with other GV proteins including GvpA.</text>
</comment>
<comment type="subcellular location">
    <subcellularLocation>
        <location evidence="7">Gas vesicle</location>
    </subcellularLocation>
    <subcellularLocation>
        <location evidence="2">Cytoplasm</location>
    </subcellularLocation>
</comment>
<comment type="similarity">
    <text evidence="6">Belongs to the CbbQ/NirQ/NorQ/GpvN family.</text>
</comment>
<dbReference type="EC" id="3.6.4.-" evidence="1"/>
<dbReference type="EMBL" id="AF087458">
    <property type="protein sequence ID" value="AAF16865.1"/>
    <property type="molecule type" value="Genomic_DNA"/>
</dbReference>
<dbReference type="SMR" id="Q9RH29"/>
<dbReference type="GO" id="GO:0005737">
    <property type="term" value="C:cytoplasm"/>
    <property type="evidence" value="ECO:0007669"/>
    <property type="project" value="UniProtKB-SubCell"/>
</dbReference>
<dbReference type="GO" id="GO:0031411">
    <property type="term" value="C:gas vesicle"/>
    <property type="evidence" value="ECO:0007669"/>
    <property type="project" value="UniProtKB-SubCell"/>
</dbReference>
<dbReference type="GO" id="GO:0005524">
    <property type="term" value="F:ATP binding"/>
    <property type="evidence" value="ECO:0007669"/>
    <property type="project" value="UniProtKB-KW"/>
</dbReference>
<dbReference type="GO" id="GO:0016887">
    <property type="term" value="F:ATP hydrolysis activity"/>
    <property type="evidence" value="ECO:0007669"/>
    <property type="project" value="InterPro"/>
</dbReference>
<dbReference type="GO" id="GO:0031412">
    <property type="term" value="P:gas vesicle organization"/>
    <property type="evidence" value="ECO:0007669"/>
    <property type="project" value="InterPro"/>
</dbReference>
<dbReference type="CDD" id="cd00009">
    <property type="entry name" value="AAA"/>
    <property type="match status" value="1"/>
</dbReference>
<dbReference type="Gene3D" id="3.40.50.300">
    <property type="entry name" value="P-loop containing nucleotide triphosphate hydrolases"/>
    <property type="match status" value="1"/>
</dbReference>
<dbReference type="InterPro" id="IPR003593">
    <property type="entry name" value="AAA+_ATPase"/>
</dbReference>
<dbReference type="InterPro" id="IPR011704">
    <property type="entry name" value="ATPase_dyneun-rel_AAA"/>
</dbReference>
<dbReference type="InterPro" id="IPR050764">
    <property type="entry name" value="CbbQ/NirQ/NorQ/GpvN"/>
</dbReference>
<dbReference type="InterPro" id="IPR013462">
    <property type="entry name" value="Gas-vesicle_GvpN"/>
</dbReference>
<dbReference type="InterPro" id="IPR027417">
    <property type="entry name" value="P-loop_NTPase"/>
</dbReference>
<dbReference type="NCBIfam" id="TIGR02640">
    <property type="entry name" value="gas_vesic_GvpN"/>
    <property type="match status" value="1"/>
</dbReference>
<dbReference type="PANTHER" id="PTHR42759:SF1">
    <property type="entry name" value="MAGNESIUM-CHELATASE SUBUNIT CHLD"/>
    <property type="match status" value="1"/>
</dbReference>
<dbReference type="PANTHER" id="PTHR42759">
    <property type="entry name" value="MOXR FAMILY PROTEIN"/>
    <property type="match status" value="1"/>
</dbReference>
<dbReference type="Pfam" id="PF07728">
    <property type="entry name" value="AAA_5"/>
    <property type="match status" value="1"/>
</dbReference>
<dbReference type="SMART" id="SM00382">
    <property type="entry name" value="AAA"/>
    <property type="match status" value="1"/>
</dbReference>
<dbReference type="SUPFAM" id="SSF52540">
    <property type="entry name" value="P-loop containing nucleoside triphosphate hydrolases"/>
    <property type="match status" value="1"/>
</dbReference>
<reference key="1">
    <citation type="submission" date="1998-08" db="EMBL/GenBank/DDBJ databases">
        <title>The gvpA, C and N genes encoding gas vesicle proteins in Ancylobacter aquaticus.</title>
        <authorList>
            <person name="Buchholz B.E.E."/>
            <person name="Martindale J."/>
            <person name="Hayes P.K."/>
        </authorList>
    </citation>
    <scope>NUCLEOTIDE SEQUENCE [GENOMIC DNA]</scope>
    <source>
        <strain>M100</strain>
    </source>
</reference>
<reference key="2">
    <citation type="journal article" date="1975" name="J. Bacteriol.">
        <title>Gas vesicle assembly in Microcyclus aquaticus.</title>
        <authorList>
            <person name="Konopka A.E."/>
            <person name="Staley J.T."/>
            <person name="Lara J.C."/>
        </authorList>
    </citation>
    <scope>GAS VESICLE FORMATION</scope>
    <source>
        <strain>ATCC 27068 / M / S1</strain>
    </source>
</reference>
<protein>
    <recommendedName>
        <fullName evidence="1">Gas vesicle ATPase GvpN</fullName>
        <ecNumber evidence="1">3.6.4.-</ecNumber>
    </recommendedName>
    <alternativeName>
        <fullName>Gas vesicle protein N</fullName>
        <shortName>GvpN</shortName>
    </alternativeName>
</protein>
<accession>Q9RH29</accession>
<proteinExistence type="inferred from homology"/>